<evidence type="ECO:0000255" key="1">
    <source>
        <dbReference type="HAMAP-Rule" id="MF_00158"/>
    </source>
</evidence>
<name>PANC_YERPA</name>
<gene>
    <name evidence="1" type="primary">panC</name>
    <name type="ordered locus">YPA_2903</name>
</gene>
<proteinExistence type="inferred from homology"/>
<dbReference type="EC" id="6.3.2.1" evidence="1"/>
<dbReference type="EMBL" id="CP000308">
    <property type="protein sequence ID" value="ABG14865.1"/>
    <property type="molecule type" value="Genomic_DNA"/>
</dbReference>
<dbReference type="RefSeq" id="WP_002209348.1">
    <property type="nucleotide sequence ID" value="NZ_CP009906.1"/>
</dbReference>
<dbReference type="SMR" id="Q1C3V7"/>
<dbReference type="GeneID" id="57975307"/>
<dbReference type="KEGG" id="ypa:YPA_2903"/>
<dbReference type="UniPathway" id="UPA00028">
    <property type="reaction ID" value="UER00005"/>
</dbReference>
<dbReference type="Proteomes" id="UP000001971">
    <property type="component" value="Chromosome"/>
</dbReference>
<dbReference type="GO" id="GO:0005829">
    <property type="term" value="C:cytosol"/>
    <property type="evidence" value="ECO:0007669"/>
    <property type="project" value="TreeGrafter"/>
</dbReference>
<dbReference type="GO" id="GO:0005524">
    <property type="term" value="F:ATP binding"/>
    <property type="evidence" value="ECO:0007669"/>
    <property type="project" value="UniProtKB-KW"/>
</dbReference>
<dbReference type="GO" id="GO:0004592">
    <property type="term" value="F:pantoate-beta-alanine ligase activity"/>
    <property type="evidence" value="ECO:0007669"/>
    <property type="project" value="UniProtKB-UniRule"/>
</dbReference>
<dbReference type="GO" id="GO:0015940">
    <property type="term" value="P:pantothenate biosynthetic process"/>
    <property type="evidence" value="ECO:0007669"/>
    <property type="project" value="UniProtKB-UniRule"/>
</dbReference>
<dbReference type="CDD" id="cd00560">
    <property type="entry name" value="PanC"/>
    <property type="match status" value="1"/>
</dbReference>
<dbReference type="FunFam" id="3.30.1300.10:FF:000001">
    <property type="entry name" value="Pantothenate synthetase"/>
    <property type="match status" value="1"/>
</dbReference>
<dbReference type="FunFam" id="3.40.50.620:FF:000013">
    <property type="entry name" value="Pantothenate synthetase"/>
    <property type="match status" value="1"/>
</dbReference>
<dbReference type="Gene3D" id="3.40.50.620">
    <property type="entry name" value="HUPs"/>
    <property type="match status" value="1"/>
</dbReference>
<dbReference type="Gene3D" id="3.30.1300.10">
    <property type="entry name" value="Pantoate-beta-alanine ligase, C-terminal domain"/>
    <property type="match status" value="1"/>
</dbReference>
<dbReference type="HAMAP" id="MF_00158">
    <property type="entry name" value="PanC"/>
    <property type="match status" value="1"/>
</dbReference>
<dbReference type="InterPro" id="IPR003721">
    <property type="entry name" value="Pantoate_ligase"/>
</dbReference>
<dbReference type="InterPro" id="IPR042176">
    <property type="entry name" value="Pantoate_ligase_C"/>
</dbReference>
<dbReference type="InterPro" id="IPR014729">
    <property type="entry name" value="Rossmann-like_a/b/a_fold"/>
</dbReference>
<dbReference type="NCBIfam" id="TIGR00018">
    <property type="entry name" value="panC"/>
    <property type="match status" value="1"/>
</dbReference>
<dbReference type="PANTHER" id="PTHR21299">
    <property type="entry name" value="CYTIDYLATE KINASE/PANTOATE-BETA-ALANINE LIGASE"/>
    <property type="match status" value="1"/>
</dbReference>
<dbReference type="PANTHER" id="PTHR21299:SF1">
    <property type="entry name" value="PANTOATE--BETA-ALANINE LIGASE"/>
    <property type="match status" value="1"/>
</dbReference>
<dbReference type="Pfam" id="PF02569">
    <property type="entry name" value="Pantoate_ligase"/>
    <property type="match status" value="1"/>
</dbReference>
<dbReference type="SUPFAM" id="SSF52374">
    <property type="entry name" value="Nucleotidylyl transferase"/>
    <property type="match status" value="1"/>
</dbReference>
<accession>Q1C3V7</accession>
<reference key="1">
    <citation type="journal article" date="2006" name="J. Bacteriol.">
        <title>Complete genome sequence of Yersinia pestis strains Antiqua and Nepal516: evidence of gene reduction in an emerging pathogen.</title>
        <authorList>
            <person name="Chain P.S.G."/>
            <person name="Hu P."/>
            <person name="Malfatti S.A."/>
            <person name="Radnedge L."/>
            <person name="Larimer F."/>
            <person name="Vergez L.M."/>
            <person name="Worsham P."/>
            <person name="Chu M.C."/>
            <person name="Andersen G.L."/>
        </authorList>
    </citation>
    <scope>NUCLEOTIDE SEQUENCE [LARGE SCALE GENOMIC DNA]</scope>
    <source>
        <strain>Antiqua</strain>
    </source>
</reference>
<comment type="function">
    <text evidence="1">Catalyzes the condensation of pantoate with beta-alanine in an ATP-dependent reaction via a pantoyl-adenylate intermediate.</text>
</comment>
<comment type="catalytic activity">
    <reaction evidence="1">
        <text>(R)-pantoate + beta-alanine + ATP = (R)-pantothenate + AMP + diphosphate + H(+)</text>
        <dbReference type="Rhea" id="RHEA:10912"/>
        <dbReference type="ChEBI" id="CHEBI:15378"/>
        <dbReference type="ChEBI" id="CHEBI:15980"/>
        <dbReference type="ChEBI" id="CHEBI:29032"/>
        <dbReference type="ChEBI" id="CHEBI:30616"/>
        <dbReference type="ChEBI" id="CHEBI:33019"/>
        <dbReference type="ChEBI" id="CHEBI:57966"/>
        <dbReference type="ChEBI" id="CHEBI:456215"/>
        <dbReference type="EC" id="6.3.2.1"/>
    </reaction>
</comment>
<comment type="pathway">
    <text evidence="1">Cofactor biosynthesis; (R)-pantothenate biosynthesis; (R)-pantothenate from (R)-pantoate and beta-alanine: step 1/1.</text>
</comment>
<comment type="subunit">
    <text evidence="1">Homodimer.</text>
</comment>
<comment type="subcellular location">
    <subcellularLocation>
        <location evidence="1">Cytoplasm</location>
    </subcellularLocation>
</comment>
<comment type="miscellaneous">
    <text evidence="1">The reaction proceeds by a bi uni uni bi ping pong mechanism.</text>
</comment>
<comment type="similarity">
    <text evidence="1">Belongs to the pantothenate synthetase family.</text>
</comment>
<keyword id="KW-0067">ATP-binding</keyword>
<keyword id="KW-0963">Cytoplasm</keyword>
<keyword id="KW-0436">Ligase</keyword>
<keyword id="KW-0547">Nucleotide-binding</keyword>
<keyword id="KW-0566">Pantothenate biosynthesis</keyword>
<sequence length="284" mass="31772">MLIIETLPLLRQQIRRWRQEGKRIALVPTMGNLHEGHMTLVDEAKTRADVVVVTIFVNPLQFERPDDLAHYPRTLQEDCEKLTRHGADLVFAPAAADIYPAGLEKQTYVDVPALSTILEGASRPGHFRGVSTIVSKLFNLIQPDVACFGEKDYQQLALIRKMVADMGYDINIVGVPTVRAKDGLALSSRNGYLTEEERQIAPQLSKIMWALAEKMALGERQIDALLEEAAAQLLRVGFTPDELFIRDAETLQPLTVDSQQAVILMAAWLGKARLIDNQLVDLRH</sequence>
<protein>
    <recommendedName>
        <fullName evidence="1">Pantothenate synthetase</fullName>
        <shortName evidence="1">PS</shortName>
        <ecNumber evidence="1">6.3.2.1</ecNumber>
    </recommendedName>
    <alternativeName>
        <fullName evidence="1">Pantoate--beta-alanine ligase</fullName>
    </alternativeName>
    <alternativeName>
        <fullName evidence="1">Pantoate-activating enzyme</fullName>
    </alternativeName>
</protein>
<feature type="chain" id="PRO_0000305580" description="Pantothenate synthetase">
    <location>
        <begin position="1"/>
        <end position="284"/>
    </location>
</feature>
<feature type="active site" description="Proton donor" evidence="1">
    <location>
        <position position="37"/>
    </location>
</feature>
<feature type="binding site" evidence="1">
    <location>
        <begin position="30"/>
        <end position="37"/>
    </location>
    <ligand>
        <name>ATP</name>
        <dbReference type="ChEBI" id="CHEBI:30616"/>
    </ligand>
</feature>
<feature type="binding site" evidence="1">
    <location>
        <position position="61"/>
    </location>
    <ligand>
        <name>(R)-pantoate</name>
        <dbReference type="ChEBI" id="CHEBI:15980"/>
    </ligand>
</feature>
<feature type="binding site" evidence="1">
    <location>
        <position position="61"/>
    </location>
    <ligand>
        <name>beta-alanine</name>
        <dbReference type="ChEBI" id="CHEBI:57966"/>
    </ligand>
</feature>
<feature type="binding site" evidence="1">
    <location>
        <begin position="149"/>
        <end position="152"/>
    </location>
    <ligand>
        <name>ATP</name>
        <dbReference type="ChEBI" id="CHEBI:30616"/>
    </ligand>
</feature>
<feature type="binding site" evidence="1">
    <location>
        <position position="155"/>
    </location>
    <ligand>
        <name>(R)-pantoate</name>
        <dbReference type="ChEBI" id="CHEBI:15980"/>
    </ligand>
</feature>
<feature type="binding site" evidence="1">
    <location>
        <position position="178"/>
    </location>
    <ligand>
        <name>ATP</name>
        <dbReference type="ChEBI" id="CHEBI:30616"/>
    </ligand>
</feature>
<feature type="binding site" evidence="1">
    <location>
        <begin position="186"/>
        <end position="189"/>
    </location>
    <ligand>
        <name>ATP</name>
        <dbReference type="ChEBI" id="CHEBI:30616"/>
    </ligand>
</feature>
<organism>
    <name type="scientific">Yersinia pestis bv. Antiqua (strain Antiqua)</name>
    <dbReference type="NCBI Taxonomy" id="360102"/>
    <lineage>
        <taxon>Bacteria</taxon>
        <taxon>Pseudomonadati</taxon>
        <taxon>Pseudomonadota</taxon>
        <taxon>Gammaproteobacteria</taxon>
        <taxon>Enterobacterales</taxon>
        <taxon>Yersiniaceae</taxon>
        <taxon>Yersinia</taxon>
    </lineage>
</organism>